<dbReference type="EMBL" id="CP000468">
    <property type="protein sequence ID" value="ABJ03747.1"/>
    <property type="molecule type" value="Genomic_DNA"/>
</dbReference>
<dbReference type="RefSeq" id="WP_001196062.1">
    <property type="nucleotide sequence ID" value="NZ_CADILS010000035.1"/>
</dbReference>
<dbReference type="SMR" id="A1AJA7"/>
<dbReference type="GeneID" id="93777620"/>
<dbReference type="KEGG" id="ecv:APECO1_2190"/>
<dbReference type="HOGENOM" id="CLU_078938_4_1_6"/>
<dbReference type="Proteomes" id="UP000008216">
    <property type="component" value="Chromosome"/>
</dbReference>
<dbReference type="GO" id="GO:1990904">
    <property type="term" value="C:ribonucleoprotein complex"/>
    <property type="evidence" value="ECO:0007669"/>
    <property type="project" value="UniProtKB-KW"/>
</dbReference>
<dbReference type="GO" id="GO:0005840">
    <property type="term" value="C:ribosome"/>
    <property type="evidence" value="ECO:0007669"/>
    <property type="project" value="UniProtKB-KW"/>
</dbReference>
<dbReference type="GO" id="GO:0019843">
    <property type="term" value="F:rRNA binding"/>
    <property type="evidence" value="ECO:0007669"/>
    <property type="project" value="UniProtKB-UniRule"/>
</dbReference>
<dbReference type="GO" id="GO:0003735">
    <property type="term" value="F:structural constituent of ribosome"/>
    <property type="evidence" value="ECO:0007669"/>
    <property type="project" value="InterPro"/>
</dbReference>
<dbReference type="GO" id="GO:0006412">
    <property type="term" value="P:translation"/>
    <property type="evidence" value="ECO:0007669"/>
    <property type="project" value="UniProtKB-UniRule"/>
</dbReference>
<dbReference type="FunFam" id="3.10.430.100:FF:000001">
    <property type="entry name" value="50S ribosomal protein L9"/>
    <property type="match status" value="1"/>
</dbReference>
<dbReference type="FunFam" id="3.40.5.10:FF:000001">
    <property type="entry name" value="50S ribosomal protein L9"/>
    <property type="match status" value="1"/>
</dbReference>
<dbReference type="Gene3D" id="3.10.430.100">
    <property type="entry name" value="Ribosomal protein L9, C-terminal domain"/>
    <property type="match status" value="1"/>
</dbReference>
<dbReference type="Gene3D" id="3.40.5.10">
    <property type="entry name" value="Ribosomal protein L9, N-terminal domain"/>
    <property type="match status" value="1"/>
</dbReference>
<dbReference type="HAMAP" id="MF_00503">
    <property type="entry name" value="Ribosomal_bL9"/>
    <property type="match status" value="1"/>
</dbReference>
<dbReference type="InterPro" id="IPR000244">
    <property type="entry name" value="Ribosomal_bL9"/>
</dbReference>
<dbReference type="InterPro" id="IPR009027">
    <property type="entry name" value="Ribosomal_bL9/RNase_H1_N"/>
</dbReference>
<dbReference type="InterPro" id="IPR020594">
    <property type="entry name" value="Ribosomal_bL9_bac/chp"/>
</dbReference>
<dbReference type="InterPro" id="IPR020069">
    <property type="entry name" value="Ribosomal_bL9_C"/>
</dbReference>
<dbReference type="InterPro" id="IPR036791">
    <property type="entry name" value="Ribosomal_bL9_C_sf"/>
</dbReference>
<dbReference type="InterPro" id="IPR020070">
    <property type="entry name" value="Ribosomal_bL9_N"/>
</dbReference>
<dbReference type="InterPro" id="IPR036935">
    <property type="entry name" value="Ribosomal_bL9_N_sf"/>
</dbReference>
<dbReference type="NCBIfam" id="TIGR00158">
    <property type="entry name" value="L9"/>
    <property type="match status" value="1"/>
</dbReference>
<dbReference type="PANTHER" id="PTHR21368">
    <property type="entry name" value="50S RIBOSOMAL PROTEIN L9"/>
    <property type="match status" value="1"/>
</dbReference>
<dbReference type="Pfam" id="PF03948">
    <property type="entry name" value="Ribosomal_L9_C"/>
    <property type="match status" value="1"/>
</dbReference>
<dbReference type="Pfam" id="PF01281">
    <property type="entry name" value="Ribosomal_L9_N"/>
    <property type="match status" value="1"/>
</dbReference>
<dbReference type="SUPFAM" id="SSF55658">
    <property type="entry name" value="L9 N-domain-like"/>
    <property type="match status" value="1"/>
</dbReference>
<dbReference type="SUPFAM" id="SSF55653">
    <property type="entry name" value="Ribosomal protein L9 C-domain"/>
    <property type="match status" value="1"/>
</dbReference>
<dbReference type="PROSITE" id="PS00651">
    <property type="entry name" value="RIBOSOMAL_L9"/>
    <property type="match status" value="1"/>
</dbReference>
<sequence length="149" mass="15769">MQVILLDKVANLGSLGDQVNVKAGYARNFLVPQGKAVPATKKNIEFFEARRAELEAKLAEVLAAANARAEKINALETVTIASKAGDEGKLFGSIGTRDIADAVTAAGVEVAKSEVRLPNGVLRTTGEHEVSFQVHSEVFAKVIVNVVAE</sequence>
<protein>
    <recommendedName>
        <fullName evidence="1">Large ribosomal subunit protein bL9</fullName>
    </recommendedName>
    <alternativeName>
        <fullName evidence="2">50S ribosomal protein L9</fullName>
    </alternativeName>
</protein>
<accession>A1AJA7</accession>
<feature type="chain" id="PRO_1000014775" description="Large ribosomal subunit protein bL9">
    <location>
        <begin position="1"/>
        <end position="149"/>
    </location>
</feature>
<feature type="modified residue" description="N6-acetyllysine" evidence="1">
    <location>
        <position position="89"/>
    </location>
</feature>
<organism>
    <name type="scientific">Escherichia coli O1:K1 / APEC</name>
    <dbReference type="NCBI Taxonomy" id="405955"/>
    <lineage>
        <taxon>Bacteria</taxon>
        <taxon>Pseudomonadati</taxon>
        <taxon>Pseudomonadota</taxon>
        <taxon>Gammaproteobacteria</taxon>
        <taxon>Enterobacterales</taxon>
        <taxon>Enterobacteriaceae</taxon>
        <taxon>Escherichia</taxon>
    </lineage>
</organism>
<reference key="1">
    <citation type="journal article" date="2007" name="J. Bacteriol.">
        <title>The genome sequence of avian pathogenic Escherichia coli strain O1:K1:H7 shares strong similarities with human extraintestinal pathogenic E. coli genomes.</title>
        <authorList>
            <person name="Johnson T.J."/>
            <person name="Kariyawasam S."/>
            <person name="Wannemuehler Y."/>
            <person name="Mangiamele P."/>
            <person name="Johnson S.J."/>
            <person name="Doetkott C."/>
            <person name="Skyberg J.A."/>
            <person name="Lynne A.M."/>
            <person name="Johnson J.R."/>
            <person name="Nolan L.K."/>
        </authorList>
    </citation>
    <scope>NUCLEOTIDE SEQUENCE [LARGE SCALE GENOMIC DNA]</scope>
</reference>
<evidence type="ECO:0000255" key="1">
    <source>
        <dbReference type="HAMAP-Rule" id="MF_00503"/>
    </source>
</evidence>
<evidence type="ECO:0000305" key="2"/>
<proteinExistence type="inferred from homology"/>
<name>RL9_ECOK1</name>
<gene>
    <name evidence="1" type="primary">rplI</name>
    <name type="ordered locus">Ecok1_42530</name>
    <name type="ORF">APECO1_2190</name>
</gene>
<comment type="function">
    <text evidence="1">Binds to the 23S rRNA.</text>
</comment>
<comment type="similarity">
    <text evidence="1">Belongs to the bacterial ribosomal protein bL9 family.</text>
</comment>
<keyword id="KW-0007">Acetylation</keyword>
<keyword id="KW-1185">Reference proteome</keyword>
<keyword id="KW-0687">Ribonucleoprotein</keyword>
<keyword id="KW-0689">Ribosomal protein</keyword>
<keyword id="KW-0694">RNA-binding</keyword>
<keyword id="KW-0699">rRNA-binding</keyword>